<organism>
    <name type="scientific">Flavobacterium sp. (strain P99-3)</name>
    <dbReference type="NCBI Taxonomy" id="216393"/>
    <lineage>
        <taxon>Bacteria</taxon>
        <taxon>Pseudomonadati</taxon>
        <taxon>Bacteroidota</taxon>
        <taxon>Flavobacteriia</taxon>
    </lineage>
</organism>
<feature type="chain" id="PRO_0000447220" description="1-hydroxycarotenoid 3,4-desaturase">
    <location>
        <begin position="1"/>
        <end position="488"/>
    </location>
</feature>
<feature type="binding site" evidence="1">
    <location>
        <position position="31"/>
    </location>
    <ligand>
        <name>FAD</name>
        <dbReference type="ChEBI" id="CHEBI:57692"/>
    </ligand>
</feature>
<feature type="binding site" evidence="1">
    <location>
        <position position="39"/>
    </location>
    <ligand>
        <name>FAD</name>
        <dbReference type="ChEBI" id="CHEBI:57692"/>
    </ligand>
</feature>
<feature type="binding site" evidence="1">
    <location>
        <begin position="55"/>
        <end position="56"/>
    </location>
    <ligand>
        <name>FAD</name>
        <dbReference type="ChEBI" id="CHEBI:57692"/>
    </ligand>
</feature>
<feature type="binding site" evidence="1">
    <location>
        <position position="247"/>
    </location>
    <ligand>
        <name>FAD</name>
        <dbReference type="ChEBI" id="CHEBI:57692"/>
    </ligand>
</feature>
<feature type="binding site" evidence="1">
    <location>
        <position position="275"/>
    </location>
    <ligand>
        <name>FAD</name>
        <dbReference type="ChEBI" id="CHEBI:57692"/>
    </ligand>
</feature>
<feature type="binding site" evidence="1">
    <location>
        <position position="431"/>
    </location>
    <ligand>
        <name>FAD</name>
        <dbReference type="ChEBI" id="CHEBI:57692"/>
    </ligand>
</feature>
<feature type="binding site" evidence="1">
    <location>
        <position position="461"/>
    </location>
    <ligand>
        <name>FAD</name>
        <dbReference type="ChEBI" id="CHEBI:57692"/>
    </ligand>
</feature>
<feature type="binding site" evidence="1">
    <location>
        <begin position="468"/>
        <end position="469"/>
    </location>
    <ligand>
        <name>FAD</name>
        <dbReference type="ChEBI" id="CHEBI:57692"/>
    </ligand>
</feature>
<comment type="function">
    <text evidence="1 3 7">Catalyzes the introduction of a C-3,4 double bond into 1'-hydroxy-gamma-carotene and rhodopin (1-hydroxylycopene) to yield 1'-hydroxytorulene and (3E)-3,4-didehydrorhodopin, respectively. Can also 1-hydroxy-all-trans-1,2-dihydro-neurosporene, 1,1'-dihydroxy-1,1',2,2'-tetrahydroneurosporene and 1,1'-dihydroxy-1,1',2,2'-tetrahydrolycopene (PubMed:15251462). Probably involved in the synthesis of myxol, a gamma-carotene derivative (Probable). May use FAD as a proton acceptor (By similarity).</text>
</comment>
<comment type="catalytic activity">
    <reaction evidence="3">
        <text>rhodopin + A = (3E)-3,4-didehydrorhodopin + AH2</text>
        <dbReference type="Rhea" id="RHEA:30919"/>
        <dbReference type="ChEBI" id="CHEBI:13193"/>
        <dbReference type="ChEBI" id="CHEBI:17499"/>
        <dbReference type="ChEBI" id="CHEBI:35331"/>
        <dbReference type="ChEBI" id="CHEBI:62481"/>
        <dbReference type="EC" id="1.3.99.27"/>
    </reaction>
</comment>
<comment type="catalytic activity">
    <reaction evidence="3">
        <text>1'-hydroxy-gamma-carotene + A = 1'-hydroxytorulene + AH2</text>
        <dbReference type="Rhea" id="RHEA:59332"/>
        <dbReference type="ChEBI" id="CHEBI:13193"/>
        <dbReference type="ChEBI" id="CHEBI:17499"/>
        <dbReference type="ChEBI" id="CHEBI:80133"/>
        <dbReference type="ChEBI" id="CHEBI:80134"/>
    </reaction>
</comment>
<comment type="catalytic activity">
    <reaction evidence="3">
        <text>1-hydroxy-all-trans-1,2-dihydro-neurosporene + A = demethylspheroidene + AH2</text>
        <dbReference type="Rhea" id="RHEA:59336"/>
        <dbReference type="ChEBI" id="CHEBI:13193"/>
        <dbReference type="ChEBI" id="CHEBI:17499"/>
        <dbReference type="ChEBI" id="CHEBI:62505"/>
        <dbReference type="ChEBI" id="CHEBI:138077"/>
    </reaction>
</comment>
<comment type="catalytic activity">
    <reaction evidence="3">
        <text>1,1'-dihydroxy-1,1',2,2'-tetrahydroneurosporene + A = 1'-hydroxy-demethylspheroidene + AH2</text>
        <dbReference type="Rhea" id="RHEA:59340"/>
        <dbReference type="ChEBI" id="CHEBI:13193"/>
        <dbReference type="ChEBI" id="CHEBI:17499"/>
        <dbReference type="ChEBI" id="CHEBI:138076"/>
        <dbReference type="ChEBI" id="CHEBI:143013"/>
    </reaction>
</comment>
<comment type="catalytic activity">
    <reaction evidence="3">
        <text>1,1'-dihydroxy-1,1',2,2'-tetrahydrolycopene + A = 1,1'-dihydroxy-3,4-didehydro-1,2-dihydrolycopene + AH2</text>
        <dbReference type="Rhea" id="RHEA:59444"/>
        <dbReference type="ChEBI" id="CHEBI:13193"/>
        <dbReference type="ChEBI" id="CHEBI:17499"/>
        <dbReference type="ChEBI" id="CHEBI:63065"/>
        <dbReference type="ChEBI" id="CHEBI:132450"/>
    </reaction>
</comment>
<comment type="pathway">
    <text evidence="2 3">Carotenoid biosynthesis.</text>
</comment>
<comment type="subunit">
    <text evidence="1">Monomer.</text>
</comment>
<comment type="similarity">
    <text evidence="2">Belongs to the carotenoid/retinoid oxidoreductase family.</text>
</comment>
<gene>
    <name evidence="4" type="primary">crtD</name>
</gene>
<keyword id="KW-0125">Carotenoid biosynthesis</keyword>
<keyword id="KW-0274">FAD</keyword>
<keyword id="KW-0285">Flavoprotein</keyword>
<keyword id="KW-0547">Nucleotide-binding</keyword>
<keyword id="KW-0560">Oxidoreductase</keyword>
<proteinExistence type="evidence at protein level"/>
<protein>
    <recommendedName>
        <fullName evidence="5">1-hydroxycarotenoid 3,4-desaturase</fullName>
        <ecNumber evidence="3">1.3.99.27</ecNumber>
    </recommendedName>
    <alternativeName>
        <fullName evidence="4">1'-hydroxy-gamma-carotene 3,4-desaturase</fullName>
    </alternativeName>
    <alternativeName>
        <fullName evidence="5">1-hydroxycarotenoid 3,4-dehydrogenase</fullName>
    </alternativeName>
</protein>
<dbReference type="EC" id="1.3.99.27" evidence="3"/>
<dbReference type="EMBL" id="AB097813">
    <property type="protein sequence ID" value="BAC77671.1"/>
    <property type="molecule type" value="Genomic_DNA"/>
</dbReference>
<dbReference type="SMR" id="Q7WT72"/>
<dbReference type="GO" id="GO:0000166">
    <property type="term" value="F:nucleotide binding"/>
    <property type="evidence" value="ECO:0007669"/>
    <property type="project" value="UniProtKB-KW"/>
</dbReference>
<dbReference type="GO" id="GO:0016491">
    <property type="term" value="F:oxidoreductase activity"/>
    <property type="evidence" value="ECO:0000314"/>
    <property type="project" value="UniProtKB"/>
</dbReference>
<dbReference type="GO" id="GO:0016117">
    <property type="term" value="P:carotenoid biosynthetic process"/>
    <property type="evidence" value="ECO:0000314"/>
    <property type="project" value="UniProtKB"/>
</dbReference>
<dbReference type="FunFam" id="3.50.50.60:FF:000378">
    <property type="entry name" value="Phytoene desaturase"/>
    <property type="match status" value="1"/>
</dbReference>
<dbReference type="Gene3D" id="3.50.50.60">
    <property type="entry name" value="FAD/NAD(P)-binding domain"/>
    <property type="match status" value="2"/>
</dbReference>
<dbReference type="InterPro" id="IPR002937">
    <property type="entry name" value="Amino_oxidase"/>
</dbReference>
<dbReference type="InterPro" id="IPR014105">
    <property type="entry name" value="Carotenoid/retinoid_OxRdtase"/>
</dbReference>
<dbReference type="InterPro" id="IPR036188">
    <property type="entry name" value="FAD/NAD-bd_sf"/>
</dbReference>
<dbReference type="InterPro" id="IPR054840">
    <property type="entry name" value="hydcarot_desat_CrtD"/>
</dbReference>
<dbReference type="NCBIfam" id="TIGR02734">
    <property type="entry name" value="crtI_fam"/>
    <property type="match status" value="1"/>
</dbReference>
<dbReference type="NCBIfam" id="NF042421">
    <property type="entry name" value="hydcarot_desat_CrtD"/>
    <property type="match status" value="1"/>
</dbReference>
<dbReference type="PANTHER" id="PTHR43734:SF7">
    <property type="entry name" value="4,4'-DIAPONEUROSPORENE OXYGENASE"/>
    <property type="match status" value="1"/>
</dbReference>
<dbReference type="PANTHER" id="PTHR43734">
    <property type="entry name" value="PHYTOENE DESATURASE"/>
    <property type="match status" value="1"/>
</dbReference>
<dbReference type="Pfam" id="PF01593">
    <property type="entry name" value="Amino_oxidase"/>
    <property type="match status" value="1"/>
</dbReference>
<dbReference type="PRINTS" id="PR00419">
    <property type="entry name" value="ADXRDTASE"/>
</dbReference>
<dbReference type="SUPFAM" id="SSF51905">
    <property type="entry name" value="FAD/NAD(P)-binding domain"/>
    <property type="match status" value="1"/>
</dbReference>
<reference evidence="8" key="1">
    <citation type="journal article" date="2003" name="FEBS Lett.">
        <title>Structural and functional analysis of a lycopene beta-monocyclase gene isolated from a unique marine bacterium that produces myxol.</title>
        <authorList>
            <person name="Teramoto M."/>
            <person name="Takaichi S."/>
            <person name="Inomata Y."/>
            <person name="Ikenaga H."/>
            <person name="Misawa N."/>
        </authorList>
    </citation>
    <scope>NUCLEOTIDE SEQUENCE [GENOMIC DNA]</scope>
    <source>
        <strain evidence="8">P99-3</strain>
    </source>
</reference>
<reference evidence="6" key="2">
    <citation type="journal article" date="2004" name="FEBS Lett.">
        <title>1-Hydroxy monocyclic carotenoid 3,4-dehydrogenase from a marine bacterium that produces myxol.</title>
        <authorList>
            <person name="Teramoto M."/>
            <person name="Raehlert N."/>
            <person name="Misawa N."/>
            <person name="Sandmann G."/>
        </authorList>
    </citation>
    <scope>FUNCTION</scope>
    <scope>CATALYTIC ACTIVITY</scope>
    <scope>PATHWAY</scope>
</reference>
<evidence type="ECO:0000250" key="1">
    <source>
        <dbReference type="UniProtKB" id="L7WC64"/>
    </source>
</evidence>
<evidence type="ECO:0000255" key="2">
    <source>
        <dbReference type="RuleBase" id="RU362075"/>
    </source>
</evidence>
<evidence type="ECO:0000269" key="3">
    <source>
    </source>
</evidence>
<evidence type="ECO:0000303" key="4">
    <source>
    </source>
</evidence>
<evidence type="ECO:0000303" key="5">
    <source>
    </source>
</evidence>
<evidence type="ECO:0000305" key="6"/>
<evidence type="ECO:0000305" key="7">
    <source>
    </source>
</evidence>
<evidence type="ECO:0000312" key="8">
    <source>
        <dbReference type="EMBL" id="BAC77671.1"/>
    </source>
</evidence>
<accession>Q7WT72</accession>
<sequence length="488" mass="55087">MKKAIIIGSGIAGLAAALRLKKKGYQVSVFEKNDYAGGKLHAIELGGYRFDLGPSLFTLPHLIDELHQLFPDVEIDFNYIKKKTACHYFWEDGTSFEAPADLENFAVKAAEIFDEKQNTLSKYLQNSKMKYESTKSLFLEKSLHKSNTYFSKQTLKAILKIPFLGINNTLDQENKKFSNPKLNQLFNRYATYNGSSPYLTPGIMSMIPYLELGLGTYYPQGGMHRISQSLFELAQKVGVEFRFRKNVKKINHSNNKVTGVTTEKGTHDADIVLCNMDVFPTYRQLLQDIKAPEKTLKQERSSSALIFYWGIKKSFPQLDLHNILFSENYKAEFEAIFNNKSLYEDPTVYINITSKQSPQDAPKGCENWFVMINTPGDYGQNWENLVIKAKKNILSKIKRCLNIDVEELIDVEYVLTPQGIEKNTSSYRGALYGAASNNKFAAFLRHPNFNKTIGNLYHVGGSVHPGGGIPLCLLSAKITADLIPNTNA</sequence>
<name>CRTDH_FLAS9</name>